<sequence>MATRYDSSITEPKWRERWERDGIYRFEPDSDKPKHYAVTMLPYPSGNLHIGHWYAMSPSDVHARYMRMRGYNVFFPMGFDAFGLPAENAAIKNNLDPRKWTYSNIEYMRGQLQSMGMMVDWDQQIVSADPEYYRWNQWFFIQFFKRGLAYKKFSAVDWCPKCNTTLAREQVVGDERRCERCDSLVTKRDLDQWYFKITSYADELLNFSELDWPERITTMQRNWIGRSEGAEISFKSEAGDPITVFSTRPDTLWGATFMVLAPEHPLVAKLTSAEQKASVDAYVAEAIRKTEVERQSTDDEKPKTGVWIGAYAINPASQERVPIWIADYVLMTYGTGAIMAVPGHDERDFAFAKTFGLAIKRVVTQSEQTAETPLEAAEPAYGTVVNSGQIDGLSSAEAKEAVINWLEAEQLGKRAINYRLRDWLVSRQRYWGTPIPMIYCPTCGTVPVPEDQLPLLLPDSVDFKPTGESPLKLHPTWRFTTCPTCGGEAERDTDTMDTFVDSSWYQVRYLSPHETNAPFTKAIADKWLPVDQYTGGREHAVMHLLYTRFWWKAMRDMGLVSANEPMTRLINQGVILGEDSNKMSKSRGNVIDPDMLVAQYGADTVRTFLMFIGPWEQGGPWNNRGIEGCVRFLDRAWRVVTDTPQRHDAVGDASTLERQTHRIIKKVGDDLQRFAFNTAIAGLMEFVNELMKVRETDVYGTTTWRKATETLTLLLAPIAPHIAEELWEFLGNSQSVHLQAWPSYDETLLIDESIELPVQINGKVRGKIQVAATADEPSIIATALADEKIAPLVAGKTIVKQIVVPNRLVNIVIK</sequence>
<keyword id="KW-0030">Aminoacyl-tRNA synthetase</keyword>
<keyword id="KW-0067">ATP-binding</keyword>
<keyword id="KW-0963">Cytoplasm</keyword>
<keyword id="KW-0436">Ligase</keyword>
<keyword id="KW-0547">Nucleotide-binding</keyword>
<keyword id="KW-0648">Protein biosynthesis</keyword>
<gene>
    <name evidence="1" type="primary">leuS</name>
    <name type="ordered locus">Haur_4419</name>
</gene>
<evidence type="ECO:0000255" key="1">
    <source>
        <dbReference type="HAMAP-Rule" id="MF_00049"/>
    </source>
</evidence>
<accession>A9AZ11</accession>
<name>SYL_HERA2</name>
<dbReference type="EC" id="6.1.1.4" evidence="1"/>
<dbReference type="EMBL" id="CP000875">
    <property type="protein sequence ID" value="ABX07051.1"/>
    <property type="molecule type" value="Genomic_DNA"/>
</dbReference>
<dbReference type="SMR" id="A9AZ11"/>
<dbReference type="FunCoup" id="A9AZ11">
    <property type="interactions" value="595"/>
</dbReference>
<dbReference type="STRING" id="316274.Haur_4419"/>
<dbReference type="KEGG" id="hau:Haur_4419"/>
<dbReference type="eggNOG" id="COG0495">
    <property type="taxonomic scope" value="Bacteria"/>
</dbReference>
<dbReference type="HOGENOM" id="CLU_004427_0_0_0"/>
<dbReference type="InParanoid" id="A9AZ11"/>
<dbReference type="Proteomes" id="UP000000787">
    <property type="component" value="Chromosome"/>
</dbReference>
<dbReference type="GO" id="GO:0005829">
    <property type="term" value="C:cytosol"/>
    <property type="evidence" value="ECO:0007669"/>
    <property type="project" value="TreeGrafter"/>
</dbReference>
<dbReference type="GO" id="GO:0002161">
    <property type="term" value="F:aminoacyl-tRNA deacylase activity"/>
    <property type="evidence" value="ECO:0007669"/>
    <property type="project" value="InterPro"/>
</dbReference>
<dbReference type="GO" id="GO:0005524">
    <property type="term" value="F:ATP binding"/>
    <property type="evidence" value="ECO:0007669"/>
    <property type="project" value="UniProtKB-UniRule"/>
</dbReference>
<dbReference type="GO" id="GO:0004823">
    <property type="term" value="F:leucine-tRNA ligase activity"/>
    <property type="evidence" value="ECO:0007669"/>
    <property type="project" value="UniProtKB-UniRule"/>
</dbReference>
<dbReference type="GO" id="GO:0006429">
    <property type="term" value="P:leucyl-tRNA aminoacylation"/>
    <property type="evidence" value="ECO:0007669"/>
    <property type="project" value="UniProtKB-UniRule"/>
</dbReference>
<dbReference type="CDD" id="cd07958">
    <property type="entry name" value="Anticodon_Ia_Leu_BEm"/>
    <property type="match status" value="1"/>
</dbReference>
<dbReference type="CDD" id="cd00812">
    <property type="entry name" value="LeuRS_core"/>
    <property type="match status" value="1"/>
</dbReference>
<dbReference type="FunFam" id="3.40.50.620:FF:000003">
    <property type="entry name" value="Leucine--tRNA ligase"/>
    <property type="match status" value="1"/>
</dbReference>
<dbReference type="FunFam" id="3.40.50.620:FF:000056">
    <property type="entry name" value="Leucine--tRNA ligase"/>
    <property type="match status" value="1"/>
</dbReference>
<dbReference type="FunFam" id="1.10.730.10:FF:000011">
    <property type="entry name" value="Leucine--tRNA ligase chloroplastic/mitochondrial"/>
    <property type="match status" value="1"/>
</dbReference>
<dbReference type="Gene3D" id="3.40.50.620">
    <property type="entry name" value="HUPs"/>
    <property type="match status" value="2"/>
</dbReference>
<dbReference type="Gene3D" id="1.10.730.10">
    <property type="entry name" value="Isoleucyl-tRNA Synthetase, Domain 1"/>
    <property type="match status" value="1"/>
</dbReference>
<dbReference type="HAMAP" id="MF_00049_B">
    <property type="entry name" value="Leu_tRNA_synth_B"/>
    <property type="match status" value="1"/>
</dbReference>
<dbReference type="InterPro" id="IPR002300">
    <property type="entry name" value="aa-tRNA-synth_Ia"/>
</dbReference>
<dbReference type="InterPro" id="IPR002302">
    <property type="entry name" value="Leu-tRNA-ligase"/>
</dbReference>
<dbReference type="InterPro" id="IPR025709">
    <property type="entry name" value="Leu_tRNA-synth_edit"/>
</dbReference>
<dbReference type="InterPro" id="IPR013155">
    <property type="entry name" value="M/V/L/I-tRNA-synth_anticd-bd"/>
</dbReference>
<dbReference type="InterPro" id="IPR014729">
    <property type="entry name" value="Rossmann-like_a/b/a_fold"/>
</dbReference>
<dbReference type="InterPro" id="IPR009080">
    <property type="entry name" value="tRNAsynth_Ia_anticodon-bd"/>
</dbReference>
<dbReference type="InterPro" id="IPR009008">
    <property type="entry name" value="Val/Leu/Ile-tRNA-synth_edit"/>
</dbReference>
<dbReference type="NCBIfam" id="TIGR00396">
    <property type="entry name" value="leuS_bact"/>
    <property type="match status" value="1"/>
</dbReference>
<dbReference type="PANTHER" id="PTHR43740:SF2">
    <property type="entry name" value="LEUCINE--TRNA LIGASE, MITOCHONDRIAL"/>
    <property type="match status" value="1"/>
</dbReference>
<dbReference type="PANTHER" id="PTHR43740">
    <property type="entry name" value="LEUCYL-TRNA SYNTHETASE"/>
    <property type="match status" value="1"/>
</dbReference>
<dbReference type="Pfam" id="PF08264">
    <property type="entry name" value="Anticodon_1"/>
    <property type="match status" value="1"/>
</dbReference>
<dbReference type="Pfam" id="PF00133">
    <property type="entry name" value="tRNA-synt_1"/>
    <property type="match status" value="1"/>
</dbReference>
<dbReference type="Pfam" id="PF13603">
    <property type="entry name" value="tRNA-synt_1_2"/>
    <property type="match status" value="1"/>
</dbReference>
<dbReference type="PRINTS" id="PR00985">
    <property type="entry name" value="TRNASYNTHLEU"/>
</dbReference>
<dbReference type="SUPFAM" id="SSF47323">
    <property type="entry name" value="Anticodon-binding domain of a subclass of class I aminoacyl-tRNA synthetases"/>
    <property type="match status" value="1"/>
</dbReference>
<dbReference type="SUPFAM" id="SSF52374">
    <property type="entry name" value="Nucleotidylyl transferase"/>
    <property type="match status" value="1"/>
</dbReference>
<dbReference type="SUPFAM" id="SSF50677">
    <property type="entry name" value="ValRS/IleRS/LeuRS editing domain"/>
    <property type="match status" value="1"/>
</dbReference>
<reference key="1">
    <citation type="journal article" date="2011" name="Stand. Genomic Sci.">
        <title>Complete genome sequence of the filamentous gliding predatory bacterium Herpetosiphon aurantiacus type strain (114-95(T)).</title>
        <authorList>
            <person name="Kiss H."/>
            <person name="Nett M."/>
            <person name="Domin N."/>
            <person name="Martin K."/>
            <person name="Maresca J.A."/>
            <person name="Copeland A."/>
            <person name="Lapidus A."/>
            <person name="Lucas S."/>
            <person name="Berry K.W."/>
            <person name="Glavina Del Rio T."/>
            <person name="Dalin E."/>
            <person name="Tice H."/>
            <person name="Pitluck S."/>
            <person name="Richardson P."/>
            <person name="Bruce D."/>
            <person name="Goodwin L."/>
            <person name="Han C."/>
            <person name="Detter J.C."/>
            <person name="Schmutz J."/>
            <person name="Brettin T."/>
            <person name="Land M."/>
            <person name="Hauser L."/>
            <person name="Kyrpides N.C."/>
            <person name="Ivanova N."/>
            <person name="Goeker M."/>
            <person name="Woyke T."/>
            <person name="Klenk H.P."/>
            <person name="Bryant D.A."/>
        </authorList>
    </citation>
    <scope>NUCLEOTIDE SEQUENCE [LARGE SCALE GENOMIC DNA]</scope>
    <source>
        <strain>ATCC 23779 / DSM 785 / 114-95</strain>
    </source>
</reference>
<proteinExistence type="inferred from homology"/>
<comment type="catalytic activity">
    <reaction evidence="1">
        <text>tRNA(Leu) + L-leucine + ATP = L-leucyl-tRNA(Leu) + AMP + diphosphate</text>
        <dbReference type="Rhea" id="RHEA:11688"/>
        <dbReference type="Rhea" id="RHEA-COMP:9613"/>
        <dbReference type="Rhea" id="RHEA-COMP:9622"/>
        <dbReference type="ChEBI" id="CHEBI:30616"/>
        <dbReference type="ChEBI" id="CHEBI:33019"/>
        <dbReference type="ChEBI" id="CHEBI:57427"/>
        <dbReference type="ChEBI" id="CHEBI:78442"/>
        <dbReference type="ChEBI" id="CHEBI:78494"/>
        <dbReference type="ChEBI" id="CHEBI:456215"/>
        <dbReference type="EC" id="6.1.1.4"/>
    </reaction>
</comment>
<comment type="subcellular location">
    <subcellularLocation>
        <location evidence="1">Cytoplasm</location>
    </subcellularLocation>
</comment>
<comment type="similarity">
    <text evidence="1">Belongs to the class-I aminoacyl-tRNA synthetase family.</text>
</comment>
<protein>
    <recommendedName>
        <fullName evidence="1">Leucine--tRNA ligase</fullName>
        <ecNumber evidence="1">6.1.1.4</ecNumber>
    </recommendedName>
    <alternativeName>
        <fullName evidence="1">Leucyl-tRNA synthetase</fullName>
        <shortName evidence="1">LeuRS</shortName>
    </alternativeName>
</protein>
<organism>
    <name type="scientific">Herpetosiphon aurantiacus (strain ATCC 23779 / DSM 785 / 114-95)</name>
    <dbReference type="NCBI Taxonomy" id="316274"/>
    <lineage>
        <taxon>Bacteria</taxon>
        <taxon>Bacillati</taxon>
        <taxon>Chloroflexota</taxon>
        <taxon>Chloroflexia</taxon>
        <taxon>Herpetosiphonales</taxon>
        <taxon>Herpetosiphonaceae</taxon>
        <taxon>Herpetosiphon</taxon>
    </lineage>
</organism>
<feature type="chain" id="PRO_1000199210" description="Leucine--tRNA ligase">
    <location>
        <begin position="1"/>
        <end position="814"/>
    </location>
</feature>
<feature type="short sequence motif" description="'HIGH' region">
    <location>
        <begin position="42"/>
        <end position="52"/>
    </location>
</feature>
<feature type="short sequence motif" description="'KMSKS' region">
    <location>
        <begin position="582"/>
        <end position="586"/>
    </location>
</feature>
<feature type="binding site" evidence="1">
    <location>
        <position position="585"/>
    </location>
    <ligand>
        <name>ATP</name>
        <dbReference type="ChEBI" id="CHEBI:30616"/>
    </ligand>
</feature>